<protein>
    <recommendedName>
        <fullName evidence="1">Acetate kinase</fullName>
        <ecNumber evidence="1">2.7.2.1</ecNumber>
    </recommendedName>
    <alternativeName>
        <fullName evidence="1">Acetokinase</fullName>
    </alternativeName>
</protein>
<comment type="function">
    <text evidence="1">Catalyzes the formation of acetyl phosphate from acetate and ATP. Can also catalyze the reverse reaction.</text>
</comment>
<comment type="catalytic activity">
    <reaction evidence="1">
        <text>acetate + ATP = acetyl phosphate + ADP</text>
        <dbReference type="Rhea" id="RHEA:11352"/>
        <dbReference type="ChEBI" id="CHEBI:22191"/>
        <dbReference type="ChEBI" id="CHEBI:30089"/>
        <dbReference type="ChEBI" id="CHEBI:30616"/>
        <dbReference type="ChEBI" id="CHEBI:456216"/>
        <dbReference type="EC" id="2.7.2.1"/>
    </reaction>
</comment>
<comment type="cofactor">
    <cofactor evidence="1">
        <name>Mg(2+)</name>
        <dbReference type="ChEBI" id="CHEBI:18420"/>
    </cofactor>
    <cofactor evidence="1">
        <name>Mn(2+)</name>
        <dbReference type="ChEBI" id="CHEBI:29035"/>
    </cofactor>
    <text evidence="1">Mg(2+). Can also accept Mn(2+).</text>
</comment>
<comment type="pathway">
    <text evidence="1">Metabolic intermediate biosynthesis; acetyl-CoA biosynthesis; acetyl-CoA from acetate: step 1/2.</text>
</comment>
<comment type="subunit">
    <text evidence="1">Homodimer.</text>
</comment>
<comment type="subcellular location">
    <subcellularLocation>
        <location evidence="1">Cytoplasm</location>
    </subcellularLocation>
</comment>
<comment type="similarity">
    <text evidence="1">Belongs to the acetokinase family.</text>
</comment>
<evidence type="ECO:0000255" key="1">
    <source>
        <dbReference type="HAMAP-Rule" id="MF_00020"/>
    </source>
</evidence>
<gene>
    <name evidence="1" type="primary">ackA</name>
    <name type="ordered locus">CMM_0896</name>
</gene>
<accession>A5CPD5</accession>
<dbReference type="EC" id="2.7.2.1" evidence="1"/>
<dbReference type="EMBL" id="AM711867">
    <property type="protein sequence ID" value="CAN00933.1"/>
    <property type="molecule type" value="Genomic_DNA"/>
</dbReference>
<dbReference type="RefSeq" id="WP_012037581.1">
    <property type="nucleotide sequence ID" value="NC_009480.1"/>
</dbReference>
<dbReference type="SMR" id="A5CPD5"/>
<dbReference type="KEGG" id="cmi:CMM_0896"/>
<dbReference type="eggNOG" id="COG0282">
    <property type="taxonomic scope" value="Bacteria"/>
</dbReference>
<dbReference type="HOGENOM" id="CLU_020352_0_1_11"/>
<dbReference type="OrthoDB" id="9802453at2"/>
<dbReference type="UniPathway" id="UPA00340">
    <property type="reaction ID" value="UER00458"/>
</dbReference>
<dbReference type="Proteomes" id="UP000001564">
    <property type="component" value="Chromosome"/>
</dbReference>
<dbReference type="GO" id="GO:0005737">
    <property type="term" value="C:cytoplasm"/>
    <property type="evidence" value="ECO:0007669"/>
    <property type="project" value="UniProtKB-SubCell"/>
</dbReference>
<dbReference type="GO" id="GO:0008776">
    <property type="term" value="F:acetate kinase activity"/>
    <property type="evidence" value="ECO:0007669"/>
    <property type="project" value="UniProtKB-UniRule"/>
</dbReference>
<dbReference type="GO" id="GO:0005524">
    <property type="term" value="F:ATP binding"/>
    <property type="evidence" value="ECO:0007669"/>
    <property type="project" value="UniProtKB-KW"/>
</dbReference>
<dbReference type="GO" id="GO:0000287">
    <property type="term" value="F:magnesium ion binding"/>
    <property type="evidence" value="ECO:0007669"/>
    <property type="project" value="UniProtKB-UniRule"/>
</dbReference>
<dbReference type="GO" id="GO:0006083">
    <property type="term" value="P:acetate metabolic process"/>
    <property type="evidence" value="ECO:0007669"/>
    <property type="project" value="TreeGrafter"/>
</dbReference>
<dbReference type="GO" id="GO:0006085">
    <property type="term" value="P:acetyl-CoA biosynthetic process"/>
    <property type="evidence" value="ECO:0007669"/>
    <property type="project" value="UniProtKB-UniRule"/>
</dbReference>
<dbReference type="CDD" id="cd24010">
    <property type="entry name" value="ASKHA_NBD_AcK_PK"/>
    <property type="match status" value="1"/>
</dbReference>
<dbReference type="Gene3D" id="3.30.420.40">
    <property type="match status" value="2"/>
</dbReference>
<dbReference type="HAMAP" id="MF_00020">
    <property type="entry name" value="Acetate_kinase"/>
    <property type="match status" value="1"/>
</dbReference>
<dbReference type="InterPro" id="IPR004372">
    <property type="entry name" value="Ac/propionate_kinase"/>
</dbReference>
<dbReference type="InterPro" id="IPR000890">
    <property type="entry name" value="Aliphatic_acid_kin_short-chain"/>
</dbReference>
<dbReference type="InterPro" id="IPR023865">
    <property type="entry name" value="Aliphatic_acid_kinase_CS"/>
</dbReference>
<dbReference type="InterPro" id="IPR043129">
    <property type="entry name" value="ATPase_NBD"/>
</dbReference>
<dbReference type="NCBIfam" id="TIGR00016">
    <property type="entry name" value="ackA"/>
    <property type="match status" value="1"/>
</dbReference>
<dbReference type="PANTHER" id="PTHR21060">
    <property type="entry name" value="ACETATE KINASE"/>
    <property type="match status" value="1"/>
</dbReference>
<dbReference type="PANTHER" id="PTHR21060:SF15">
    <property type="entry name" value="ACETATE KINASE-RELATED"/>
    <property type="match status" value="1"/>
</dbReference>
<dbReference type="Pfam" id="PF00871">
    <property type="entry name" value="Acetate_kinase"/>
    <property type="match status" value="1"/>
</dbReference>
<dbReference type="PIRSF" id="PIRSF000722">
    <property type="entry name" value="Acetate_prop_kin"/>
    <property type="match status" value="1"/>
</dbReference>
<dbReference type="PRINTS" id="PR00471">
    <property type="entry name" value="ACETATEKNASE"/>
</dbReference>
<dbReference type="SUPFAM" id="SSF53067">
    <property type="entry name" value="Actin-like ATPase domain"/>
    <property type="match status" value="2"/>
</dbReference>
<dbReference type="PROSITE" id="PS01075">
    <property type="entry name" value="ACETATE_KINASE_1"/>
    <property type="match status" value="1"/>
</dbReference>
<dbReference type="PROSITE" id="PS01076">
    <property type="entry name" value="ACETATE_KINASE_2"/>
    <property type="match status" value="1"/>
</dbReference>
<keyword id="KW-0067">ATP-binding</keyword>
<keyword id="KW-0963">Cytoplasm</keyword>
<keyword id="KW-0418">Kinase</keyword>
<keyword id="KW-0460">Magnesium</keyword>
<keyword id="KW-0479">Metal-binding</keyword>
<keyword id="KW-0547">Nucleotide-binding</keyword>
<keyword id="KW-0808">Transferase</keyword>
<feature type="chain" id="PRO_1000002219" description="Acetate kinase">
    <location>
        <begin position="1"/>
        <end position="396"/>
    </location>
</feature>
<feature type="active site" description="Proton donor/acceptor" evidence="1">
    <location>
        <position position="146"/>
    </location>
</feature>
<feature type="binding site" evidence="1">
    <location>
        <position position="8"/>
    </location>
    <ligand>
        <name>Mg(2+)</name>
        <dbReference type="ChEBI" id="CHEBI:18420"/>
    </ligand>
</feature>
<feature type="binding site" evidence="1">
    <location>
        <position position="15"/>
    </location>
    <ligand>
        <name>ATP</name>
        <dbReference type="ChEBI" id="CHEBI:30616"/>
    </ligand>
</feature>
<feature type="binding site" evidence="1">
    <location>
        <position position="89"/>
    </location>
    <ligand>
        <name>substrate</name>
    </ligand>
</feature>
<feature type="binding site" evidence="1">
    <location>
        <begin position="206"/>
        <end position="210"/>
    </location>
    <ligand>
        <name>ATP</name>
        <dbReference type="ChEBI" id="CHEBI:30616"/>
    </ligand>
</feature>
<feature type="binding site" evidence="1">
    <location>
        <begin position="280"/>
        <end position="282"/>
    </location>
    <ligand>
        <name>ATP</name>
        <dbReference type="ChEBI" id="CHEBI:30616"/>
    </ligand>
</feature>
<feature type="binding site" evidence="1">
    <location>
        <begin position="328"/>
        <end position="332"/>
    </location>
    <ligand>
        <name>ATP</name>
        <dbReference type="ChEBI" id="CHEBI:30616"/>
    </ligand>
</feature>
<feature type="binding site" evidence="1">
    <location>
        <position position="382"/>
    </location>
    <ligand>
        <name>Mg(2+)</name>
        <dbReference type="ChEBI" id="CHEBI:18420"/>
    </ligand>
</feature>
<feature type="site" description="Transition state stabilizer" evidence="1">
    <location>
        <position position="178"/>
    </location>
</feature>
<feature type="site" description="Transition state stabilizer" evidence="1">
    <location>
        <position position="239"/>
    </location>
</feature>
<sequence>MPVVLVVNSGSSSFKYQLIEMDTESVLASGLVERIGEPTGSTRHKAGGDSWERELPIADHTAGFQAMLDAFAEHGPSLEEEPPVAVGHRVVHGGDVFVEPTVVTDDVKADIDDLSALAPLHNPGALQGIAAAQTAFPDVPHVAVFDTAFHQTLPAEAYTYAIDRELAAAHRIRRYGFHGTSHKFVSEAAARLLGKPLEETRIIVLHLGNGASAAAVQGGRSIDTSMGLTPLEGLVMGTRSGDIDPAILFHLARHTDLGLDDLETLLNRRSGLLGLTGLGDMRDVQRAAADGDEAAQTALGVYRHRIRHYVGAYAAQLGGVDAVVFTAGVGENNPLVRRRSLAGLEFMGIGIDDDRNELISSEARFVSPEGSPVAVLVIPTDEELEIARQSLAATAG</sequence>
<proteinExistence type="inferred from homology"/>
<name>ACKA_CLAM3</name>
<reference key="1">
    <citation type="journal article" date="2008" name="J. Bacteriol.">
        <title>The genome sequence of the tomato-pathogenic actinomycete Clavibacter michiganensis subsp. michiganensis NCPPB382 reveals a large island involved in pathogenicity.</title>
        <authorList>
            <person name="Gartemann K.-H."/>
            <person name="Abt B."/>
            <person name="Bekel T."/>
            <person name="Burger A."/>
            <person name="Engemann J."/>
            <person name="Fluegel M."/>
            <person name="Gaigalat L."/>
            <person name="Goesmann A."/>
            <person name="Graefen I."/>
            <person name="Kalinowski J."/>
            <person name="Kaup O."/>
            <person name="Kirchner O."/>
            <person name="Krause L."/>
            <person name="Linke B."/>
            <person name="McHardy A."/>
            <person name="Meyer F."/>
            <person name="Pohle S."/>
            <person name="Rueckert C."/>
            <person name="Schneiker S."/>
            <person name="Zellermann E.-M."/>
            <person name="Puehler A."/>
            <person name="Eichenlaub R."/>
            <person name="Kaiser O."/>
            <person name="Bartels D."/>
        </authorList>
    </citation>
    <scope>NUCLEOTIDE SEQUENCE [LARGE SCALE GENOMIC DNA]</scope>
    <source>
        <strain>NCPPB 382</strain>
    </source>
</reference>
<organism>
    <name type="scientific">Clavibacter michiganensis subsp. michiganensis (strain NCPPB 382)</name>
    <dbReference type="NCBI Taxonomy" id="443906"/>
    <lineage>
        <taxon>Bacteria</taxon>
        <taxon>Bacillati</taxon>
        <taxon>Actinomycetota</taxon>
        <taxon>Actinomycetes</taxon>
        <taxon>Micrococcales</taxon>
        <taxon>Microbacteriaceae</taxon>
        <taxon>Clavibacter</taxon>
    </lineage>
</organism>